<evidence type="ECO:0000255" key="1">
    <source>
        <dbReference type="HAMAP-Rule" id="MF_00223"/>
    </source>
</evidence>
<organism>
    <name type="scientific">Bacillus anthracis (strain CDC 684 / NRRL 3495)</name>
    <dbReference type="NCBI Taxonomy" id="568206"/>
    <lineage>
        <taxon>Bacteria</taxon>
        <taxon>Bacillati</taxon>
        <taxon>Bacillota</taxon>
        <taxon>Bacilli</taxon>
        <taxon>Bacillales</taxon>
        <taxon>Bacillaceae</taxon>
        <taxon>Bacillus</taxon>
        <taxon>Bacillus cereus group</taxon>
    </lineage>
</organism>
<name>GCH1_BACAC</name>
<protein>
    <recommendedName>
        <fullName evidence="1">GTP cyclohydrolase 1</fullName>
        <ecNumber evidence="1">3.5.4.16</ecNumber>
    </recommendedName>
    <alternativeName>
        <fullName evidence="1">GTP cyclohydrolase I</fullName>
        <shortName evidence="1">GTP-CH-I</shortName>
    </alternativeName>
</protein>
<dbReference type="EC" id="3.5.4.16" evidence="1"/>
<dbReference type="EMBL" id="CP001215">
    <property type="protein sequence ID" value="ACP15059.1"/>
    <property type="molecule type" value="Genomic_DNA"/>
</dbReference>
<dbReference type="RefSeq" id="WP_001151482.1">
    <property type="nucleotide sequence ID" value="NC_012581.1"/>
</dbReference>
<dbReference type="SMR" id="C3L8S8"/>
<dbReference type="GeneID" id="93009529"/>
<dbReference type="KEGG" id="bah:BAMEG_3061"/>
<dbReference type="HOGENOM" id="CLU_049768_3_3_9"/>
<dbReference type="UniPathway" id="UPA00848">
    <property type="reaction ID" value="UER00151"/>
</dbReference>
<dbReference type="GO" id="GO:0005737">
    <property type="term" value="C:cytoplasm"/>
    <property type="evidence" value="ECO:0007669"/>
    <property type="project" value="TreeGrafter"/>
</dbReference>
<dbReference type="GO" id="GO:0005525">
    <property type="term" value="F:GTP binding"/>
    <property type="evidence" value="ECO:0007669"/>
    <property type="project" value="UniProtKB-KW"/>
</dbReference>
<dbReference type="GO" id="GO:0003934">
    <property type="term" value="F:GTP cyclohydrolase I activity"/>
    <property type="evidence" value="ECO:0007669"/>
    <property type="project" value="UniProtKB-UniRule"/>
</dbReference>
<dbReference type="GO" id="GO:0008270">
    <property type="term" value="F:zinc ion binding"/>
    <property type="evidence" value="ECO:0007669"/>
    <property type="project" value="UniProtKB-UniRule"/>
</dbReference>
<dbReference type="GO" id="GO:0006730">
    <property type="term" value="P:one-carbon metabolic process"/>
    <property type="evidence" value="ECO:0007669"/>
    <property type="project" value="UniProtKB-UniRule"/>
</dbReference>
<dbReference type="GO" id="GO:0006729">
    <property type="term" value="P:tetrahydrobiopterin biosynthetic process"/>
    <property type="evidence" value="ECO:0007669"/>
    <property type="project" value="TreeGrafter"/>
</dbReference>
<dbReference type="GO" id="GO:0046654">
    <property type="term" value="P:tetrahydrofolate biosynthetic process"/>
    <property type="evidence" value="ECO:0007669"/>
    <property type="project" value="UniProtKB-UniRule"/>
</dbReference>
<dbReference type="CDD" id="cd00642">
    <property type="entry name" value="GTP_cyclohydro1"/>
    <property type="match status" value="1"/>
</dbReference>
<dbReference type="FunFam" id="1.10.286.10:FF:000001">
    <property type="entry name" value="GTP cyclohydrolase 1"/>
    <property type="match status" value="1"/>
</dbReference>
<dbReference type="FunFam" id="3.30.1130.10:FF:000001">
    <property type="entry name" value="GTP cyclohydrolase 1"/>
    <property type="match status" value="1"/>
</dbReference>
<dbReference type="Gene3D" id="1.10.286.10">
    <property type="match status" value="1"/>
</dbReference>
<dbReference type="Gene3D" id="3.30.1130.10">
    <property type="match status" value="1"/>
</dbReference>
<dbReference type="HAMAP" id="MF_00223">
    <property type="entry name" value="FolE"/>
    <property type="match status" value="1"/>
</dbReference>
<dbReference type="InterPro" id="IPR043133">
    <property type="entry name" value="GTP-CH-I_C/QueF"/>
</dbReference>
<dbReference type="InterPro" id="IPR043134">
    <property type="entry name" value="GTP-CH-I_N"/>
</dbReference>
<dbReference type="InterPro" id="IPR001474">
    <property type="entry name" value="GTP_CycHdrlase_I"/>
</dbReference>
<dbReference type="InterPro" id="IPR018234">
    <property type="entry name" value="GTP_CycHdrlase_I_CS"/>
</dbReference>
<dbReference type="InterPro" id="IPR020602">
    <property type="entry name" value="GTP_CycHdrlase_I_dom"/>
</dbReference>
<dbReference type="NCBIfam" id="TIGR00063">
    <property type="entry name" value="folE"/>
    <property type="match status" value="1"/>
</dbReference>
<dbReference type="NCBIfam" id="NF006825">
    <property type="entry name" value="PRK09347.1-2"/>
    <property type="match status" value="1"/>
</dbReference>
<dbReference type="NCBIfam" id="NF006826">
    <property type="entry name" value="PRK09347.1-3"/>
    <property type="match status" value="1"/>
</dbReference>
<dbReference type="PANTHER" id="PTHR11109:SF7">
    <property type="entry name" value="GTP CYCLOHYDROLASE 1"/>
    <property type="match status" value="1"/>
</dbReference>
<dbReference type="PANTHER" id="PTHR11109">
    <property type="entry name" value="GTP CYCLOHYDROLASE I"/>
    <property type="match status" value="1"/>
</dbReference>
<dbReference type="Pfam" id="PF01227">
    <property type="entry name" value="GTP_cyclohydroI"/>
    <property type="match status" value="1"/>
</dbReference>
<dbReference type="SUPFAM" id="SSF55620">
    <property type="entry name" value="Tetrahydrobiopterin biosynthesis enzymes-like"/>
    <property type="match status" value="1"/>
</dbReference>
<dbReference type="PROSITE" id="PS00859">
    <property type="entry name" value="GTP_CYCLOHYDROL_1_1"/>
    <property type="match status" value="1"/>
</dbReference>
<dbReference type="PROSITE" id="PS00860">
    <property type="entry name" value="GTP_CYCLOHYDROL_1_2"/>
    <property type="match status" value="1"/>
</dbReference>
<comment type="catalytic activity">
    <reaction evidence="1">
        <text>GTP + H2O = 7,8-dihydroneopterin 3'-triphosphate + formate + H(+)</text>
        <dbReference type="Rhea" id="RHEA:17473"/>
        <dbReference type="ChEBI" id="CHEBI:15377"/>
        <dbReference type="ChEBI" id="CHEBI:15378"/>
        <dbReference type="ChEBI" id="CHEBI:15740"/>
        <dbReference type="ChEBI" id="CHEBI:37565"/>
        <dbReference type="ChEBI" id="CHEBI:58462"/>
        <dbReference type="EC" id="3.5.4.16"/>
    </reaction>
</comment>
<comment type="pathway">
    <text evidence="1">Cofactor biosynthesis; 7,8-dihydroneopterin triphosphate biosynthesis; 7,8-dihydroneopterin triphosphate from GTP: step 1/1.</text>
</comment>
<comment type="subunit">
    <text evidence="1">Homomer.</text>
</comment>
<comment type="similarity">
    <text evidence="1">Belongs to the GTP cyclohydrolase I family.</text>
</comment>
<gene>
    <name evidence="1" type="primary">folE</name>
    <name type="ordered locus">BAMEG_3061</name>
</gene>
<reference key="1">
    <citation type="submission" date="2008-10" db="EMBL/GenBank/DDBJ databases">
        <title>Genome sequence of Bacillus anthracis str. CDC 684.</title>
        <authorList>
            <person name="Dodson R.J."/>
            <person name="Munk A.C."/>
            <person name="Brettin T."/>
            <person name="Bruce D."/>
            <person name="Detter C."/>
            <person name="Tapia R."/>
            <person name="Han C."/>
            <person name="Sutton G."/>
            <person name="Sims D."/>
        </authorList>
    </citation>
    <scope>NUCLEOTIDE SEQUENCE [LARGE SCALE GENOMIC DNA]</scope>
    <source>
        <strain>CDC 684 / NRRL 3495</strain>
    </source>
</reference>
<keyword id="KW-0342">GTP-binding</keyword>
<keyword id="KW-0378">Hydrolase</keyword>
<keyword id="KW-0479">Metal-binding</keyword>
<keyword id="KW-0547">Nucleotide-binding</keyword>
<keyword id="KW-0554">One-carbon metabolism</keyword>
<keyword id="KW-0862">Zinc</keyword>
<proteinExistence type="inferred from homology"/>
<feature type="chain" id="PRO_1000124907" description="GTP cyclohydrolase 1">
    <location>
        <begin position="1"/>
        <end position="189"/>
    </location>
</feature>
<feature type="binding site" evidence="1">
    <location>
        <position position="78"/>
    </location>
    <ligand>
        <name>Zn(2+)</name>
        <dbReference type="ChEBI" id="CHEBI:29105"/>
    </ligand>
</feature>
<feature type="binding site" evidence="1">
    <location>
        <position position="81"/>
    </location>
    <ligand>
        <name>Zn(2+)</name>
        <dbReference type="ChEBI" id="CHEBI:29105"/>
    </ligand>
</feature>
<feature type="binding site" evidence="1">
    <location>
        <position position="150"/>
    </location>
    <ligand>
        <name>Zn(2+)</name>
        <dbReference type="ChEBI" id="CHEBI:29105"/>
    </ligand>
</feature>
<accession>C3L8S8</accession>
<sequence length="189" mass="21020">MAKVNLEQIEHAVRLILEAIGDDPNREGVLDTPKRVAKMYAEVFSGMHEDPKEHLHKVFGEDHEELVLVKDIPFYSMCEHHLVPFYGVAHVAYIPQGGKVTGLSKLARTVDTIARRPQLQERITSTVANSIMEVLEPHGVMVVVEAEHMCMTMRGVKKPGAKTVTTAVRGVLENDAAARSEILSFIKTK</sequence>